<feature type="chain" id="PRO_1000093856" description="Holo-[acyl-carrier-protein] synthase">
    <location>
        <begin position="1"/>
        <end position="125"/>
    </location>
</feature>
<feature type="binding site" evidence="1">
    <location>
        <position position="8"/>
    </location>
    <ligand>
        <name>Mg(2+)</name>
        <dbReference type="ChEBI" id="CHEBI:18420"/>
    </ligand>
</feature>
<feature type="binding site" evidence="1">
    <location>
        <position position="56"/>
    </location>
    <ligand>
        <name>Mg(2+)</name>
        <dbReference type="ChEBI" id="CHEBI:18420"/>
    </ligand>
</feature>
<organism>
    <name type="scientific">Borrelia hermsii (strain HS1 / DAH)</name>
    <dbReference type="NCBI Taxonomy" id="314723"/>
    <lineage>
        <taxon>Bacteria</taxon>
        <taxon>Pseudomonadati</taxon>
        <taxon>Spirochaetota</taxon>
        <taxon>Spirochaetia</taxon>
        <taxon>Spirochaetales</taxon>
        <taxon>Borreliaceae</taxon>
        <taxon>Borrelia</taxon>
    </lineage>
</organism>
<gene>
    <name evidence="1" type="primary">acpS</name>
    <name type="ordered locus">BH0010</name>
</gene>
<evidence type="ECO:0000255" key="1">
    <source>
        <dbReference type="HAMAP-Rule" id="MF_00101"/>
    </source>
</evidence>
<proteinExistence type="inferred from homology"/>
<protein>
    <recommendedName>
        <fullName evidence="1">Holo-[acyl-carrier-protein] synthase</fullName>
        <shortName evidence="1">Holo-ACP synthase</shortName>
        <ecNumber evidence="1">2.7.8.7</ecNumber>
    </recommendedName>
    <alternativeName>
        <fullName evidence="1">4'-phosphopantetheinyl transferase AcpS</fullName>
    </alternativeName>
</protein>
<reference key="1">
    <citation type="submission" date="2004-12" db="EMBL/GenBank/DDBJ databases">
        <title>The genome sequence of Borrelia hermsii and Borrelia turicatae: comparative analysis of two agents of endemic N. America relapsing fever.</title>
        <authorList>
            <person name="Porcella S.F."/>
            <person name="Raffel S.J."/>
            <person name="Schrumpf M.E."/>
            <person name="Montgomery B."/>
            <person name="Smith T."/>
            <person name="Schwan T.G."/>
        </authorList>
    </citation>
    <scope>NUCLEOTIDE SEQUENCE [LARGE SCALE GENOMIC DNA]</scope>
    <source>
        <strain>HS1 / DAH</strain>
    </source>
</reference>
<comment type="function">
    <text evidence="1">Transfers the 4'-phosphopantetheine moiety from coenzyme A to a Ser of acyl-carrier-protein.</text>
</comment>
<comment type="catalytic activity">
    <reaction evidence="1">
        <text>apo-[ACP] + CoA = holo-[ACP] + adenosine 3',5'-bisphosphate + H(+)</text>
        <dbReference type="Rhea" id="RHEA:12068"/>
        <dbReference type="Rhea" id="RHEA-COMP:9685"/>
        <dbReference type="Rhea" id="RHEA-COMP:9690"/>
        <dbReference type="ChEBI" id="CHEBI:15378"/>
        <dbReference type="ChEBI" id="CHEBI:29999"/>
        <dbReference type="ChEBI" id="CHEBI:57287"/>
        <dbReference type="ChEBI" id="CHEBI:58343"/>
        <dbReference type="ChEBI" id="CHEBI:64479"/>
        <dbReference type="EC" id="2.7.8.7"/>
    </reaction>
</comment>
<comment type="cofactor">
    <cofactor evidence="1">
        <name>Mg(2+)</name>
        <dbReference type="ChEBI" id="CHEBI:18420"/>
    </cofactor>
</comment>
<comment type="subcellular location">
    <subcellularLocation>
        <location evidence="1">Cytoplasm</location>
    </subcellularLocation>
</comment>
<comment type="similarity">
    <text evidence="1">Belongs to the P-Pant transferase superfamily. AcpS family.</text>
</comment>
<dbReference type="EC" id="2.7.8.7" evidence="1"/>
<dbReference type="EMBL" id="CP000048">
    <property type="protein sequence ID" value="AAX16536.1"/>
    <property type="molecule type" value="Genomic_DNA"/>
</dbReference>
<dbReference type="RefSeq" id="WP_012421793.1">
    <property type="nucleotide sequence ID" value="NZ_CP073136.1"/>
</dbReference>
<dbReference type="SMR" id="B2S1J9"/>
<dbReference type="KEGG" id="bhr:BH0010"/>
<dbReference type="HOGENOM" id="CLU_089696_5_0_12"/>
<dbReference type="Proteomes" id="UP000008834">
    <property type="component" value="Chromosome"/>
</dbReference>
<dbReference type="GO" id="GO:0005737">
    <property type="term" value="C:cytoplasm"/>
    <property type="evidence" value="ECO:0007669"/>
    <property type="project" value="UniProtKB-SubCell"/>
</dbReference>
<dbReference type="GO" id="GO:0008897">
    <property type="term" value="F:holo-[acyl-carrier-protein] synthase activity"/>
    <property type="evidence" value="ECO:0007669"/>
    <property type="project" value="UniProtKB-UniRule"/>
</dbReference>
<dbReference type="GO" id="GO:0000287">
    <property type="term" value="F:magnesium ion binding"/>
    <property type="evidence" value="ECO:0007669"/>
    <property type="project" value="UniProtKB-UniRule"/>
</dbReference>
<dbReference type="GO" id="GO:0006633">
    <property type="term" value="P:fatty acid biosynthetic process"/>
    <property type="evidence" value="ECO:0007669"/>
    <property type="project" value="UniProtKB-UniRule"/>
</dbReference>
<dbReference type="Gene3D" id="3.90.470.20">
    <property type="entry name" value="4'-phosphopantetheinyl transferase domain"/>
    <property type="match status" value="1"/>
</dbReference>
<dbReference type="HAMAP" id="MF_00101">
    <property type="entry name" value="AcpS"/>
    <property type="match status" value="1"/>
</dbReference>
<dbReference type="InterPro" id="IPR008278">
    <property type="entry name" value="4-PPantetheinyl_Trfase_dom"/>
</dbReference>
<dbReference type="InterPro" id="IPR037143">
    <property type="entry name" value="4-PPantetheinyl_Trfase_dom_sf"/>
</dbReference>
<dbReference type="InterPro" id="IPR002582">
    <property type="entry name" value="ACPS"/>
</dbReference>
<dbReference type="InterPro" id="IPR004568">
    <property type="entry name" value="Ppantetheine-prot_Trfase_dom"/>
</dbReference>
<dbReference type="NCBIfam" id="TIGR00556">
    <property type="entry name" value="pantethn_trn"/>
    <property type="match status" value="1"/>
</dbReference>
<dbReference type="Pfam" id="PF01648">
    <property type="entry name" value="ACPS"/>
    <property type="match status" value="1"/>
</dbReference>
<dbReference type="SUPFAM" id="SSF56214">
    <property type="entry name" value="4'-phosphopantetheinyl transferase"/>
    <property type="match status" value="1"/>
</dbReference>
<sequence>MTKSIGCDIIKVTRFNSFLQNRKKLDRFFTQREIENLEMKGKGILESLAGKFSAKEALIKALSPLINTKIKYSLKDIEIIALPKGNIIFQLHNDIKVLIEQMDLKLYLTISHEREYAIAFVIVED</sequence>
<name>ACPS_BORHD</name>
<keyword id="KW-0963">Cytoplasm</keyword>
<keyword id="KW-0275">Fatty acid biosynthesis</keyword>
<keyword id="KW-0276">Fatty acid metabolism</keyword>
<keyword id="KW-0444">Lipid biosynthesis</keyword>
<keyword id="KW-0443">Lipid metabolism</keyword>
<keyword id="KW-0460">Magnesium</keyword>
<keyword id="KW-0479">Metal-binding</keyword>
<keyword id="KW-0808">Transferase</keyword>
<accession>B2S1J9</accession>